<gene>
    <name evidence="1" type="primary">glnA</name>
</gene>
<protein>
    <recommendedName>
        <fullName evidence="1">Glutamine synthetase</fullName>
        <shortName evidence="1">GS</shortName>
        <ecNumber evidence="1">6.3.1.2</ecNumber>
    </recommendedName>
    <alternativeName>
        <fullName evidence="8">Glutamate--ammonia ligase</fullName>
    </alternativeName>
    <alternativeName>
        <fullName evidence="1">Glutamine synthetase I beta</fullName>
        <shortName evidence="1">GSI beta</shortName>
    </alternativeName>
</protein>
<name>GLN1B_AZOBR</name>
<organism>
    <name type="scientific">Azospirillum brasilense</name>
    <dbReference type="NCBI Taxonomy" id="192"/>
    <lineage>
        <taxon>Bacteria</taxon>
        <taxon>Pseudomonadati</taxon>
        <taxon>Pseudomonadota</taxon>
        <taxon>Alphaproteobacteria</taxon>
        <taxon>Rhodospirillales</taxon>
        <taxon>Azospirillaceae</taxon>
        <taxon>Azospirillum</taxon>
    </lineage>
</organism>
<comment type="function">
    <text evidence="1">Catalyzes the ATP-dependent biosynthesis of glutamine from glutamate and ammonia.</text>
</comment>
<comment type="catalytic activity">
    <reaction evidence="1">
        <text>L-glutamate + NH4(+) + ATP = L-glutamine + ADP + phosphate + H(+)</text>
        <dbReference type="Rhea" id="RHEA:16169"/>
        <dbReference type="ChEBI" id="CHEBI:15378"/>
        <dbReference type="ChEBI" id="CHEBI:28938"/>
        <dbReference type="ChEBI" id="CHEBI:29985"/>
        <dbReference type="ChEBI" id="CHEBI:30616"/>
        <dbReference type="ChEBI" id="CHEBI:43474"/>
        <dbReference type="ChEBI" id="CHEBI:58359"/>
        <dbReference type="ChEBI" id="CHEBI:456216"/>
        <dbReference type="EC" id="6.3.1.2"/>
    </reaction>
</comment>
<comment type="cofactor">
    <cofactor evidence="4">
        <name>Mg(2+)</name>
        <dbReference type="ChEBI" id="CHEBI:18420"/>
    </cofactor>
    <text evidence="4">Binds 2 Mg(2+) ions per subunit.</text>
</comment>
<comment type="activity regulation">
    <text evidence="5">The activity of this enzyme could be controlled by adenylation under conditions of abundant glutamine.</text>
</comment>
<comment type="subunit">
    <text evidence="1">Oligomer of 12 subunits arranged in the form of two hexameric ring.</text>
</comment>
<comment type="subcellular location">
    <subcellularLocation>
        <location evidence="4">Cytoplasm</location>
    </subcellularLocation>
</comment>
<comment type="similarity">
    <text evidence="8">Belongs to the glutamine synthetase family.</text>
</comment>
<accession>P10583</accession>
<sequence length="468" mass="51976">MSDISKVFDLIKEHDVKYVDLRFTDPRGKLHHTAQHVSTIDEDVFEDGIMFDGSSIAGWKAINESDMILQLDPTTAVMDPFSAQPTLNILCDVYEPSTGQPYARCPRGIAKAAEKYMASAGIADTAYFGPEAEFFVFDDVKFKVEMNKVSYEFDSEEGPYTSDKDYEDGNLGHRPGVKGGYFPVAPVDSGSDLRAEMLSVLAEMGVPVEKHHHEVAASQHELGIKFDTLVRTGDNMQYYKYVVHNVAHAYGKTATFMPKPVFGDNGSGMHMHQSIWKEGQPLFAGNQYADLSELALYYIGGIIKHAKALNAFTNPTTNSYKRLVPGYEAPVLLAYSARNRSASCRIPYVASPKGKRVEVRFPDPSANPYLAFAALLMAGLDGIQNKIHPGEAMDKNLYDLPAEELAKVPTVCGSREALDSLKADSAFLQKGDVFTKDMIESYIDLRTEELLAFETMPHPIEYKMYYSV</sequence>
<feature type="chain" id="PRO_0000153229" description="Glutamine synthetase">
    <location>
        <begin position="1"/>
        <end position="468"/>
    </location>
</feature>
<feature type="domain" description="GS beta-grasp" evidence="6">
    <location>
        <begin position="14"/>
        <end position="98"/>
    </location>
</feature>
<feature type="domain" description="GS catalytic" evidence="7">
    <location>
        <begin position="106"/>
        <end position="468"/>
    </location>
</feature>
<feature type="binding site" evidence="4">
    <location>
        <position position="131"/>
    </location>
    <ligand>
        <name>Mg(2+)</name>
        <dbReference type="ChEBI" id="CHEBI:18420"/>
        <label>1</label>
    </ligand>
</feature>
<feature type="binding site" evidence="4">
    <location>
        <position position="133"/>
    </location>
    <ligand>
        <name>Mg(2+)</name>
        <dbReference type="ChEBI" id="CHEBI:18420"/>
        <label>2</label>
    </ligand>
</feature>
<feature type="binding site" evidence="1">
    <location>
        <position position="209"/>
    </location>
    <ligand>
        <name>ATP</name>
        <dbReference type="ChEBI" id="CHEBI:30616"/>
    </ligand>
</feature>
<feature type="binding site" evidence="4">
    <location>
        <position position="214"/>
    </location>
    <ligand>
        <name>Mg(2+)</name>
        <dbReference type="ChEBI" id="CHEBI:18420"/>
        <label>2</label>
    </ligand>
</feature>
<feature type="binding site" evidence="4">
    <location>
        <position position="221"/>
    </location>
    <ligand>
        <name>Mg(2+)</name>
        <dbReference type="ChEBI" id="CHEBI:18420"/>
        <label>2</label>
    </ligand>
</feature>
<feature type="binding site" evidence="1">
    <location>
        <begin position="265"/>
        <end position="266"/>
    </location>
    <ligand>
        <name>L-glutamate</name>
        <dbReference type="ChEBI" id="CHEBI:29985"/>
    </ligand>
</feature>
<feature type="binding site" evidence="2">
    <location>
        <position position="266"/>
    </location>
    <ligand>
        <name>L-glutamate</name>
        <dbReference type="ChEBI" id="CHEBI:29985"/>
    </ligand>
</feature>
<feature type="binding site" evidence="4">
    <location>
        <position position="270"/>
    </location>
    <ligand>
        <name>Mg(2+)</name>
        <dbReference type="ChEBI" id="CHEBI:18420"/>
        <label>1</label>
    </ligand>
</feature>
<feature type="binding site" evidence="1">
    <location>
        <begin position="272"/>
        <end position="274"/>
    </location>
    <ligand>
        <name>ATP</name>
        <dbReference type="ChEBI" id="CHEBI:30616"/>
    </ligand>
</feature>
<feature type="binding site" evidence="3">
    <location>
        <position position="274"/>
    </location>
    <ligand>
        <name>ATP</name>
        <dbReference type="ChEBI" id="CHEBI:30616"/>
    </ligand>
</feature>
<feature type="binding site" evidence="1">
    <location>
        <position position="322"/>
    </location>
    <ligand>
        <name>L-glutamate</name>
        <dbReference type="ChEBI" id="CHEBI:29985"/>
    </ligand>
</feature>
<feature type="binding site" evidence="1">
    <location>
        <position position="328"/>
    </location>
    <ligand>
        <name>L-glutamate</name>
        <dbReference type="ChEBI" id="CHEBI:29985"/>
    </ligand>
</feature>
<feature type="binding site" evidence="4">
    <location>
        <position position="340"/>
    </location>
    <ligand>
        <name>ATP</name>
        <dbReference type="ChEBI" id="CHEBI:30616"/>
    </ligand>
</feature>
<feature type="binding site" evidence="4">
    <location>
        <position position="340"/>
    </location>
    <ligand>
        <name>L-glutamate</name>
        <dbReference type="ChEBI" id="CHEBI:29985"/>
    </ligand>
</feature>
<feature type="binding site" evidence="4">
    <location>
        <position position="345"/>
    </location>
    <ligand>
        <name>ATP</name>
        <dbReference type="ChEBI" id="CHEBI:30616"/>
    </ligand>
</feature>
<feature type="binding site" evidence="3">
    <location>
        <position position="353"/>
    </location>
    <ligand>
        <name>ATP</name>
        <dbReference type="ChEBI" id="CHEBI:30616"/>
    </ligand>
</feature>
<feature type="binding site" evidence="4">
    <location>
        <position position="358"/>
    </location>
    <ligand>
        <name>Mg(2+)</name>
        <dbReference type="ChEBI" id="CHEBI:18420"/>
        <label>1</label>
    </ligand>
</feature>
<feature type="binding site" evidence="1">
    <location>
        <position position="360"/>
    </location>
    <ligand>
        <name>L-glutamate</name>
        <dbReference type="ChEBI" id="CHEBI:29985"/>
    </ligand>
</feature>
<feature type="modified residue" description="O-AMP-tyrosine" evidence="4">
    <location>
        <position position="398"/>
    </location>
</feature>
<keyword id="KW-0067">ATP-binding</keyword>
<keyword id="KW-0963">Cytoplasm</keyword>
<keyword id="KW-0436">Ligase</keyword>
<keyword id="KW-0460">Magnesium</keyword>
<keyword id="KW-0479">Metal-binding</keyword>
<keyword id="KW-0535">Nitrogen fixation</keyword>
<keyword id="KW-0547">Nucleotide-binding</keyword>
<keyword id="KW-0597">Phosphoprotein</keyword>
<evidence type="ECO:0000250" key="1">
    <source>
        <dbReference type="UniProtKB" id="P0A1P6"/>
    </source>
</evidence>
<evidence type="ECO:0000250" key="2">
    <source>
        <dbReference type="UniProtKB" id="P12425"/>
    </source>
</evidence>
<evidence type="ECO:0000250" key="3">
    <source>
        <dbReference type="UniProtKB" id="P77961"/>
    </source>
</evidence>
<evidence type="ECO:0000250" key="4">
    <source>
        <dbReference type="UniProtKB" id="P9WN39"/>
    </source>
</evidence>
<evidence type="ECO:0000250" key="5">
    <source>
        <dbReference type="UniProtKB" id="Q3V5W6"/>
    </source>
</evidence>
<evidence type="ECO:0000255" key="6">
    <source>
        <dbReference type="PROSITE-ProRule" id="PRU01330"/>
    </source>
</evidence>
<evidence type="ECO:0000255" key="7">
    <source>
        <dbReference type="PROSITE-ProRule" id="PRU01331"/>
    </source>
</evidence>
<evidence type="ECO:0000305" key="8"/>
<dbReference type="EC" id="6.3.1.2" evidence="1"/>
<dbReference type="EMBL" id="M26107">
    <property type="protein sequence ID" value="AAA22183.1"/>
    <property type="molecule type" value="Genomic_DNA"/>
</dbReference>
<dbReference type="PIR" id="A24714">
    <property type="entry name" value="AJKCQB"/>
</dbReference>
<dbReference type="SMR" id="P10583"/>
<dbReference type="GO" id="GO:0005737">
    <property type="term" value="C:cytoplasm"/>
    <property type="evidence" value="ECO:0007669"/>
    <property type="project" value="UniProtKB-SubCell"/>
</dbReference>
<dbReference type="GO" id="GO:0016020">
    <property type="term" value="C:membrane"/>
    <property type="evidence" value="ECO:0007669"/>
    <property type="project" value="TreeGrafter"/>
</dbReference>
<dbReference type="GO" id="GO:0005524">
    <property type="term" value="F:ATP binding"/>
    <property type="evidence" value="ECO:0007669"/>
    <property type="project" value="UniProtKB-KW"/>
</dbReference>
<dbReference type="GO" id="GO:0004356">
    <property type="term" value="F:glutamine synthetase activity"/>
    <property type="evidence" value="ECO:0007669"/>
    <property type="project" value="UniProtKB-EC"/>
</dbReference>
<dbReference type="GO" id="GO:0046872">
    <property type="term" value="F:metal ion binding"/>
    <property type="evidence" value="ECO:0007669"/>
    <property type="project" value="UniProtKB-KW"/>
</dbReference>
<dbReference type="GO" id="GO:0006542">
    <property type="term" value="P:glutamine biosynthetic process"/>
    <property type="evidence" value="ECO:0007669"/>
    <property type="project" value="InterPro"/>
</dbReference>
<dbReference type="GO" id="GO:0009399">
    <property type="term" value="P:nitrogen fixation"/>
    <property type="evidence" value="ECO:0007669"/>
    <property type="project" value="UniProtKB-KW"/>
</dbReference>
<dbReference type="GO" id="GO:0019740">
    <property type="term" value="P:nitrogen utilization"/>
    <property type="evidence" value="ECO:0007669"/>
    <property type="project" value="TreeGrafter"/>
</dbReference>
<dbReference type="FunFam" id="3.30.590.10:FF:000001">
    <property type="entry name" value="Glutamine synthetase"/>
    <property type="match status" value="1"/>
</dbReference>
<dbReference type="Gene3D" id="3.10.20.70">
    <property type="entry name" value="Glutamine synthetase, N-terminal domain"/>
    <property type="match status" value="1"/>
</dbReference>
<dbReference type="Gene3D" id="3.30.590.10">
    <property type="entry name" value="Glutamine synthetase/guanido kinase, catalytic domain"/>
    <property type="match status" value="1"/>
</dbReference>
<dbReference type="InterPro" id="IPR008147">
    <property type="entry name" value="Gln_synt_N"/>
</dbReference>
<dbReference type="InterPro" id="IPR036651">
    <property type="entry name" value="Gln_synt_N_sf"/>
</dbReference>
<dbReference type="InterPro" id="IPR014746">
    <property type="entry name" value="Gln_synth/guanido_kin_cat_dom"/>
</dbReference>
<dbReference type="InterPro" id="IPR008146">
    <property type="entry name" value="Gln_synth_cat_dom"/>
</dbReference>
<dbReference type="InterPro" id="IPR027303">
    <property type="entry name" value="Gln_synth_gly_rich_site"/>
</dbReference>
<dbReference type="InterPro" id="IPR004809">
    <property type="entry name" value="Gln_synth_I"/>
</dbReference>
<dbReference type="InterPro" id="IPR001637">
    <property type="entry name" value="Gln_synth_I_adenylation_site"/>
</dbReference>
<dbReference type="InterPro" id="IPR027302">
    <property type="entry name" value="Gln_synth_N_conserv_site"/>
</dbReference>
<dbReference type="NCBIfam" id="TIGR00653">
    <property type="entry name" value="GlnA"/>
    <property type="match status" value="1"/>
</dbReference>
<dbReference type="PANTHER" id="PTHR43407">
    <property type="entry name" value="GLUTAMINE SYNTHETASE"/>
    <property type="match status" value="1"/>
</dbReference>
<dbReference type="PANTHER" id="PTHR43407:SF2">
    <property type="entry name" value="GLUTAMINE SYNTHETASE"/>
    <property type="match status" value="1"/>
</dbReference>
<dbReference type="Pfam" id="PF00120">
    <property type="entry name" value="Gln-synt_C"/>
    <property type="match status" value="1"/>
</dbReference>
<dbReference type="Pfam" id="PF03951">
    <property type="entry name" value="Gln-synt_N"/>
    <property type="match status" value="1"/>
</dbReference>
<dbReference type="SMART" id="SM01230">
    <property type="entry name" value="Gln-synt_C"/>
    <property type="match status" value="1"/>
</dbReference>
<dbReference type="SUPFAM" id="SSF54368">
    <property type="entry name" value="Glutamine synthetase, N-terminal domain"/>
    <property type="match status" value="1"/>
</dbReference>
<dbReference type="SUPFAM" id="SSF55931">
    <property type="entry name" value="Glutamine synthetase/guanido kinase"/>
    <property type="match status" value="1"/>
</dbReference>
<dbReference type="PROSITE" id="PS00180">
    <property type="entry name" value="GLNA_1"/>
    <property type="match status" value="1"/>
</dbReference>
<dbReference type="PROSITE" id="PS00182">
    <property type="entry name" value="GLNA_ADENYLATION"/>
    <property type="match status" value="1"/>
</dbReference>
<dbReference type="PROSITE" id="PS00181">
    <property type="entry name" value="GLNA_ATP"/>
    <property type="match status" value="1"/>
</dbReference>
<dbReference type="PROSITE" id="PS51986">
    <property type="entry name" value="GS_BETA_GRASP"/>
    <property type="match status" value="1"/>
</dbReference>
<dbReference type="PROSITE" id="PS51987">
    <property type="entry name" value="GS_CATALYTIC"/>
    <property type="match status" value="1"/>
</dbReference>
<reference key="1">
    <citation type="journal article" date="1986" name="Biochimie">
        <title>Nucleotide sequence of the Azospirillum brasilense Sp7 glutamine synthetase structural gene.</title>
        <authorList>
            <person name="Bozouklian H."/>
            <person name="Elmerich C."/>
        </authorList>
    </citation>
    <scope>NUCLEOTIDE SEQUENCE [GENOMIC DNA]</scope>
    <source>
        <strain>ATCC 29145 / DSM 1690 / IMET 11303 / Sp7</strain>
    </source>
</reference>
<proteinExistence type="inferred from homology"/>